<sequence length="122" mass="13076">MSKALLRFVRLSPTKARLIARQIQGMNAELAIASLEFTPNKAARVLSKVVASAVANGSLDAKSALIVSCRVDAGPVLRRSIPRAKGRATAIRKPTSHVFVEVAEGKEMKSSKSHKKNQAEGK</sequence>
<feature type="chain" id="PRO_0000125163" description="Large ribosomal subunit protein uL22">
    <location>
        <begin position="1"/>
        <end position="122"/>
    </location>
</feature>
<feature type="region of interest" description="Disordered" evidence="2">
    <location>
        <begin position="102"/>
        <end position="122"/>
    </location>
</feature>
<protein>
    <recommendedName>
        <fullName evidence="1">Large ribosomal subunit protein uL22</fullName>
    </recommendedName>
    <alternativeName>
        <fullName evidence="3">50S ribosomal protein L22</fullName>
    </alternativeName>
</protein>
<gene>
    <name evidence="1" type="primary">rplV</name>
    <name type="ordered locus">HP_1314</name>
</gene>
<organism>
    <name type="scientific">Helicobacter pylori (strain ATCC 700392 / 26695)</name>
    <name type="common">Campylobacter pylori</name>
    <dbReference type="NCBI Taxonomy" id="85962"/>
    <lineage>
        <taxon>Bacteria</taxon>
        <taxon>Pseudomonadati</taxon>
        <taxon>Campylobacterota</taxon>
        <taxon>Epsilonproteobacteria</taxon>
        <taxon>Campylobacterales</taxon>
        <taxon>Helicobacteraceae</taxon>
        <taxon>Helicobacter</taxon>
    </lineage>
</organism>
<comment type="function">
    <text evidence="1">This protein binds specifically to 23S rRNA; its binding is stimulated by other ribosomal proteins, e.g. L4, L17, and L20. It is important during the early stages of 50S assembly. It makes multiple contacts with different domains of the 23S rRNA in the assembled 50S subunit and ribosome (By similarity).</text>
</comment>
<comment type="function">
    <text evidence="1">The globular domain of the protein is located near the polypeptide exit tunnel on the outside of the subunit, while an extended beta-hairpin is found that lines the wall of the exit tunnel in the center of the 70S ribosome.</text>
</comment>
<comment type="subunit">
    <text evidence="1">Part of the 50S ribosomal subunit.</text>
</comment>
<comment type="similarity">
    <text evidence="1">Belongs to the universal ribosomal protein uL22 family.</text>
</comment>
<evidence type="ECO:0000255" key="1">
    <source>
        <dbReference type="HAMAP-Rule" id="MF_01331"/>
    </source>
</evidence>
<evidence type="ECO:0000256" key="2">
    <source>
        <dbReference type="SAM" id="MobiDB-lite"/>
    </source>
</evidence>
<evidence type="ECO:0000305" key="3"/>
<dbReference type="EMBL" id="AE000511">
    <property type="protein sequence ID" value="AAD08353.1"/>
    <property type="molecule type" value="Genomic_DNA"/>
</dbReference>
<dbReference type="PIR" id="B64684">
    <property type="entry name" value="B64684"/>
</dbReference>
<dbReference type="RefSeq" id="NP_208106.1">
    <property type="nucleotide sequence ID" value="NC_000915.1"/>
</dbReference>
<dbReference type="RefSeq" id="WP_000030375.1">
    <property type="nucleotide sequence ID" value="NC_018939.1"/>
</dbReference>
<dbReference type="SMR" id="P56047"/>
<dbReference type="DIP" id="DIP-3280N"/>
<dbReference type="FunCoup" id="P56047">
    <property type="interactions" value="393"/>
</dbReference>
<dbReference type="IntAct" id="P56047">
    <property type="interactions" value="2"/>
</dbReference>
<dbReference type="MINT" id="P56047"/>
<dbReference type="STRING" id="85962.HP_1314"/>
<dbReference type="PaxDb" id="85962-C694_06785"/>
<dbReference type="EnsemblBacteria" id="AAD08353">
    <property type="protein sequence ID" value="AAD08353"/>
    <property type="gene ID" value="HP_1314"/>
</dbReference>
<dbReference type="KEGG" id="heo:C694_06785"/>
<dbReference type="KEGG" id="hpy:HP_1314"/>
<dbReference type="PATRIC" id="fig|85962.47.peg.1408"/>
<dbReference type="eggNOG" id="COG0091">
    <property type="taxonomic scope" value="Bacteria"/>
</dbReference>
<dbReference type="InParanoid" id="P56047"/>
<dbReference type="OrthoDB" id="9805969at2"/>
<dbReference type="PhylomeDB" id="P56047"/>
<dbReference type="Proteomes" id="UP000000429">
    <property type="component" value="Chromosome"/>
</dbReference>
<dbReference type="GO" id="GO:0022625">
    <property type="term" value="C:cytosolic large ribosomal subunit"/>
    <property type="evidence" value="ECO:0000318"/>
    <property type="project" value="GO_Central"/>
</dbReference>
<dbReference type="GO" id="GO:0019843">
    <property type="term" value="F:rRNA binding"/>
    <property type="evidence" value="ECO:0007669"/>
    <property type="project" value="UniProtKB-UniRule"/>
</dbReference>
<dbReference type="GO" id="GO:0003735">
    <property type="term" value="F:structural constituent of ribosome"/>
    <property type="evidence" value="ECO:0000318"/>
    <property type="project" value="GO_Central"/>
</dbReference>
<dbReference type="GO" id="GO:0006412">
    <property type="term" value="P:translation"/>
    <property type="evidence" value="ECO:0000318"/>
    <property type="project" value="GO_Central"/>
</dbReference>
<dbReference type="CDD" id="cd00336">
    <property type="entry name" value="Ribosomal_L22"/>
    <property type="match status" value="1"/>
</dbReference>
<dbReference type="FunFam" id="3.90.470.10:FF:000007">
    <property type="entry name" value="50S ribosomal protein L22"/>
    <property type="match status" value="1"/>
</dbReference>
<dbReference type="Gene3D" id="3.90.470.10">
    <property type="entry name" value="Ribosomal protein L22/L17"/>
    <property type="match status" value="1"/>
</dbReference>
<dbReference type="HAMAP" id="MF_01331_B">
    <property type="entry name" value="Ribosomal_uL22_B"/>
    <property type="match status" value="1"/>
</dbReference>
<dbReference type="InterPro" id="IPR001063">
    <property type="entry name" value="Ribosomal_uL22"/>
</dbReference>
<dbReference type="InterPro" id="IPR005727">
    <property type="entry name" value="Ribosomal_uL22_bac/chlpt-type"/>
</dbReference>
<dbReference type="InterPro" id="IPR047867">
    <property type="entry name" value="Ribosomal_uL22_bac/org-type"/>
</dbReference>
<dbReference type="InterPro" id="IPR018260">
    <property type="entry name" value="Ribosomal_uL22_CS"/>
</dbReference>
<dbReference type="InterPro" id="IPR036394">
    <property type="entry name" value="Ribosomal_uL22_sf"/>
</dbReference>
<dbReference type="NCBIfam" id="TIGR01044">
    <property type="entry name" value="rplV_bact"/>
    <property type="match status" value="1"/>
</dbReference>
<dbReference type="PANTHER" id="PTHR13501">
    <property type="entry name" value="CHLOROPLAST 50S RIBOSOMAL PROTEIN L22-RELATED"/>
    <property type="match status" value="1"/>
</dbReference>
<dbReference type="PANTHER" id="PTHR13501:SF8">
    <property type="entry name" value="LARGE RIBOSOMAL SUBUNIT PROTEIN UL22M"/>
    <property type="match status" value="1"/>
</dbReference>
<dbReference type="Pfam" id="PF00237">
    <property type="entry name" value="Ribosomal_L22"/>
    <property type="match status" value="1"/>
</dbReference>
<dbReference type="SUPFAM" id="SSF54843">
    <property type="entry name" value="Ribosomal protein L22"/>
    <property type="match status" value="1"/>
</dbReference>
<dbReference type="PROSITE" id="PS00464">
    <property type="entry name" value="RIBOSOMAL_L22"/>
    <property type="match status" value="1"/>
</dbReference>
<reference key="1">
    <citation type="journal article" date="1997" name="Nature">
        <title>The complete genome sequence of the gastric pathogen Helicobacter pylori.</title>
        <authorList>
            <person name="Tomb J.-F."/>
            <person name="White O."/>
            <person name="Kerlavage A.R."/>
            <person name="Clayton R.A."/>
            <person name="Sutton G.G."/>
            <person name="Fleischmann R.D."/>
            <person name="Ketchum K.A."/>
            <person name="Klenk H.-P."/>
            <person name="Gill S.R."/>
            <person name="Dougherty B.A."/>
            <person name="Nelson K.E."/>
            <person name="Quackenbush J."/>
            <person name="Zhou L."/>
            <person name="Kirkness E.F."/>
            <person name="Peterson S.N."/>
            <person name="Loftus B.J."/>
            <person name="Richardson D.L."/>
            <person name="Dodson R.J."/>
            <person name="Khalak H.G."/>
            <person name="Glodek A."/>
            <person name="McKenney K."/>
            <person name="FitzGerald L.M."/>
            <person name="Lee N."/>
            <person name="Adams M.D."/>
            <person name="Hickey E.K."/>
            <person name="Berg D.E."/>
            <person name="Gocayne J.D."/>
            <person name="Utterback T.R."/>
            <person name="Peterson J.D."/>
            <person name="Kelley J.M."/>
            <person name="Cotton M.D."/>
            <person name="Weidman J.F."/>
            <person name="Fujii C."/>
            <person name="Bowman C."/>
            <person name="Watthey L."/>
            <person name="Wallin E."/>
            <person name="Hayes W.S."/>
            <person name="Borodovsky M."/>
            <person name="Karp P.D."/>
            <person name="Smith H.O."/>
            <person name="Fraser C.M."/>
            <person name="Venter J.C."/>
        </authorList>
    </citation>
    <scope>NUCLEOTIDE SEQUENCE [LARGE SCALE GENOMIC DNA]</scope>
    <source>
        <strain>ATCC 700392 / 26695</strain>
    </source>
</reference>
<reference key="2">
    <citation type="journal article" date="2013" name="Nucleic Acids Res.">
        <title>A minimal bacterial RNase J-based degradosome is associated with translating ribosomes.</title>
        <authorList>
            <person name="Redko Y."/>
            <person name="Aubert S."/>
            <person name="Stachowicz A."/>
            <person name="Lenormand P."/>
            <person name="Namane A."/>
            <person name="Darfeuille F."/>
            <person name="Thibonnier M."/>
            <person name="De Reuse H."/>
        </authorList>
    </citation>
    <scope>IDENTIFICATION BY MASS SPECTROMETRY</scope>
    <source>
        <strain>ATCC 700392 / 26695</strain>
    </source>
</reference>
<proteinExistence type="evidence at protein level"/>
<accession>P56047</accession>
<keyword id="KW-1185">Reference proteome</keyword>
<keyword id="KW-0687">Ribonucleoprotein</keyword>
<keyword id="KW-0689">Ribosomal protein</keyword>
<keyword id="KW-0694">RNA-binding</keyword>
<keyword id="KW-0699">rRNA-binding</keyword>
<name>RL22_HELPY</name>